<proteinExistence type="inferred from homology"/>
<evidence type="ECO:0000255" key="1">
    <source>
        <dbReference type="HAMAP-Rule" id="MF_01216"/>
    </source>
</evidence>
<gene>
    <name evidence="1" type="primary">azoR</name>
    <name type="ordered locus">GDI3773</name>
    <name type="ordered locus">Gdia_2649</name>
</gene>
<dbReference type="EC" id="1.6.5.-" evidence="1"/>
<dbReference type="EC" id="1.7.1.17" evidence="1"/>
<dbReference type="EMBL" id="AM889285">
    <property type="protein sequence ID" value="CAP57716.1"/>
    <property type="molecule type" value="Genomic_DNA"/>
</dbReference>
<dbReference type="EMBL" id="CP001189">
    <property type="protein sequence ID" value="ACI52390.1"/>
    <property type="molecule type" value="Genomic_DNA"/>
</dbReference>
<dbReference type="RefSeq" id="WP_012228526.1">
    <property type="nucleotide sequence ID" value="NC_010125.1"/>
</dbReference>
<dbReference type="SMR" id="A9H9I9"/>
<dbReference type="STRING" id="272568.GDI3773"/>
<dbReference type="KEGG" id="gdi:GDI3773"/>
<dbReference type="KEGG" id="gdj:Gdia_2649"/>
<dbReference type="eggNOG" id="COG1182">
    <property type="taxonomic scope" value="Bacteria"/>
</dbReference>
<dbReference type="HOGENOM" id="CLU_088964_0_0_5"/>
<dbReference type="OrthoDB" id="9787136at2"/>
<dbReference type="Proteomes" id="UP000001176">
    <property type="component" value="Chromosome"/>
</dbReference>
<dbReference type="GO" id="GO:0009055">
    <property type="term" value="F:electron transfer activity"/>
    <property type="evidence" value="ECO:0007669"/>
    <property type="project" value="UniProtKB-UniRule"/>
</dbReference>
<dbReference type="GO" id="GO:0010181">
    <property type="term" value="F:FMN binding"/>
    <property type="evidence" value="ECO:0007669"/>
    <property type="project" value="UniProtKB-UniRule"/>
</dbReference>
<dbReference type="GO" id="GO:0016652">
    <property type="term" value="F:oxidoreductase activity, acting on NAD(P)H as acceptor"/>
    <property type="evidence" value="ECO:0007669"/>
    <property type="project" value="UniProtKB-UniRule"/>
</dbReference>
<dbReference type="GO" id="GO:0016655">
    <property type="term" value="F:oxidoreductase activity, acting on NAD(P)H, quinone or similar compound as acceptor"/>
    <property type="evidence" value="ECO:0007669"/>
    <property type="project" value="InterPro"/>
</dbReference>
<dbReference type="Gene3D" id="3.40.50.360">
    <property type="match status" value="1"/>
</dbReference>
<dbReference type="HAMAP" id="MF_01216">
    <property type="entry name" value="Azoreductase_type1"/>
    <property type="match status" value="1"/>
</dbReference>
<dbReference type="InterPro" id="IPR003680">
    <property type="entry name" value="Flavodoxin_fold"/>
</dbReference>
<dbReference type="InterPro" id="IPR029039">
    <property type="entry name" value="Flavoprotein-like_sf"/>
</dbReference>
<dbReference type="InterPro" id="IPR050104">
    <property type="entry name" value="FMN-dep_NADH:Q_OxRdtase_AzoR1"/>
</dbReference>
<dbReference type="InterPro" id="IPR023048">
    <property type="entry name" value="NADH:quinone_OxRdtase_FMN_depd"/>
</dbReference>
<dbReference type="PANTHER" id="PTHR43741">
    <property type="entry name" value="FMN-DEPENDENT NADH-AZOREDUCTASE 1"/>
    <property type="match status" value="1"/>
</dbReference>
<dbReference type="PANTHER" id="PTHR43741:SF4">
    <property type="entry name" value="FMN-DEPENDENT NADH:QUINONE OXIDOREDUCTASE"/>
    <property type="match status" value="1"/>
</dbReference>
<dbReference type="Pfam" id="PF02525">
    <property type="entry name" value="Flavodoxin_2"/>
    <property type="match status" value="1"/>
</dbReference>
<dbReference type="SUPFAM" id="SSF52218">
    <property type="entry name" value="Flavoproteins"/>
    <property type="match status" value="1"/>
</dbReference>
<keyword id="KW-0285">Flavoprotein</keyword>
<keyword id="KW-0288">FMN</keyword>
<keyword id="KW-0520">NAD</keyword>
<keyword id="KW-0560">Oxidoreductase</keyword>
<keyword id="KW-1185">Reference proteome</keyword>
<reference key="1">
    <citation type="journal article" date="2009" name="BMC Genomics">
        <title>Complete genome sequence of the sugarcane nitrogen-fixing endophyte Gluconacetobacter diazotrophicus Pal5.</title>
        <authorList>
            <person name="Bertalan M."/>
            <person name="Albano R."/>
            <person name="de Padua V."/>
            <person name="Rouws L."/>
            <person name="Rojas C."/>
            <person name="Hemerly A."/>
            <person name="Teixeira K."/>
            <person name="Schwab S."/>
            <person name="Araujo J."/>
            <person name="Oliveira A."/>
            <person name="Franca L."/>
            <person name="Magalhaes V."/>
            <person name="Alqueres S."/>
            <person name="Cardoso A."/>
            <person name="Almeida W."/>
            <person name="Loureiro M.M."/>
            <person name="Nogueira E."/>
            <person name="Cidade D."/>
            <person name="Oliveira D."/>
            <person name="Simao T."/>
            <person name="Macedo J."/>
            <person name="Valadao A."/>
            <person name="Dreschsel M."/>
            <person name="Freitas F."/>
            <person name="Vidal M."/>
            <person name="Guedes H."/>
            <person name="Rodrigues E."/>
            <person name="Meneses C."/>
            <person name="Brioso P."/>
            <person name="Pozzer L."/>
            <person name="Figueiredo D."/>
            <person name="Montano H."/>
            <person name="Junior J."/>
            <person name="de Souza Filho G."/>
            <person name="Martin Quintana Flores V."/>
            <person name="Ferreira B."/>
            <person name="Branco A."/>
            <person name="Gonzalez P."/>
            <person name="Guillobel H."/>
            <person name="Lemos M."/>
            <person name="Seibel L."/>
            <person name="Macedo J."/>
            <person name="Alves-Ferreira M."/>
            <person name="Sachetto-Martins G."/>
            <person name="Coelho A."/>
            <person name="Santos E."/>
            <person name="Amaral G."/>
            <person name="Neves A."/>
            <person name="Pacheco A.B."/>
            <person name="Carvalho D."/>
            <person name="Lery L."/>
            <person name="Bisch P."/>
            <person name="Rossle S.C."/>
            <person name="Urmenyi T."/>
            <person name="Rael Pereira A."/>
            <person name="Silva R."/>
            <person name="Rondinelli E."/>
            <person name="von Kruger W."/>
            <person name="Martins O."/>
            <person name="Baldani J.I."/>
            <person name="Ferreira P.C."/>
        </authorList>
    </citation>
    <scope>NUCLEOTIDE SEQUENCE [LARGE SCALE GENOMIC DNA]</scope>
    <source>
        <strain>ATCC 49037 / DSM 5601 / CCUG 37298 / CIP 103539 / LMG 7603 / PAl5</strain>
    </source>
</reference>
<reference key="2">
    <citation type="journal article" date="2010" name="Stand. Genomic Sci.">
        <title>Two genome sequences of the same bacterial strain, Gluconacetobacter diazotrophicus PAl 5, suggest a new standard in genome sequence submission.</title>
        <authorList>
            <person name="Giongo A."/>
            <person name="Tyler H.L."/>
            <person name="Zipperer U.N."/>
            <person name="Triplett E.W."/>
        </authorList>
    </citation>
    <scope>NUCLEOTIDE SEQUENCE [LARGE SCALE GENOMIC DNA]</scope>
    <source>
        <strain>ATCC 49037 / DSM 5601 / CCUG 37298 / CIP 103539 / LMG 7603 / PAl5</strain>
    </source>
</reference>
<feature type="chain" id="PRO_1000085583" description="FMN-dependent NADH:quinone oxidoreductase">
    <location>
        <begin position="1"/>
        <end position="201"/>
    </location>
</feature>
<feature type="binding site" evidence="1">
    <location>
        <position position="9"/>
    </location>
    <ligand>
        <name>FMN</name>
        <dbReference type="ChEBI" id="CHEBI:58210"/>
    </ligand>
</feature>
<feature type="binding site" evidence="1">
    <location>
        <begin position="16"/>
        <end position="18"/>
    </location>
    <ligand>
        <name>FMN</name>
        <dbReference type="ChEBI" id="CHEBI:58210"/>
    </ligand>
</feature>
<feature type="binding site" evidence="1">
    <location>
        <begin position="93"/>
        <end position="96"/>
    </location>
    <ligand>
        <name>FMN</name>
        <dbReference type="ChEBI" id="CHEBI:58210"/>
    </ligand>
</feature>
<comment type="function">
    <text evidence="1">Quinone reductase that provides resistance to thiol-specific stress caused by electrophilic quinones.</text>
</comment>
<comment type="function">
    <text evidence="1">Also exhibits azoreductase activity. Catalyzes the reductive cleavage of the azo bond in aromatic azo compounds to the corresponding amines.</text>
</comment>
<comment type="catalytic activity">
    <reaction evidence="1">
        <text>2 a quinone + NADH + H(+) = 2 a 1,4-benzosemiquinone + NAD(+)</text>
        <dbReference type="Rhea" id="RHEA:65952"/>
        <dbReference type="ChEBI" id="CHEBI:15378"/>
        <dbReference type="ChEBI" id="CHEBI:57540"/>
        <dbReference type="ChEBI" id="CHEBI:57945"/>
        <dbReference type="ChEBI" id="CHEBI:132124"/>
        <dbReference type="ChEBI" id="CHEBI:134225"/>
    </reaction>
</comment>
<comment type="catalytic activity">
    <reaction evidence="1">
        <text>N,N-dimethyl-1,4-phenylenediamine + anthranilate + 2 NAD(+) = 2-(4-dimethylaminophenyl)diazenylbenzoate + 2 NADH + 2 H(+)</text>
        <dbReference type="Rhea" id="RHEA:55872"/>
        <dbReference type="ChEBI" id="CHEBI:15378"/>
        <dbReference type="ChEBI" id="CHEBI:15783"/>
        <dbReference type="ChEBI" id="CHEBI:16567"/>
        <dbReference type="ChEBI" id="CHEBI:57540"/>
        <dbReference type="ChEBI" id="CHEBI:57945"/>
        <dbReference type="ChEBI" id="CHEBI:71579"/>
        <dbReference type="EC" id="1.7.1.17"/>
    </reaction>
</comment>
<comment type="cofactor">
    <cofactor evidence="1">
        <name>FMN</name>
        <dbReference type="ChEBI" id="CHEBI:58210"/>
    </cofactor>
    <text evidence="1">Binds 1 FMN per subunit.</text>
</comment>
<comment type="subunit">
    <text evidence="1">Homodimer.</text>
</comment>
<comment type="similarity">
    <text evidence="1">Belongs to the azoreductase type 1 family.</text>
</comment>
<sequence>MKLLHLDASILPEDSSVSRTLSAAVVAHVRALQPDLTVTRRDLVAHPLSHMTLANLPPDHPASVPGNEVERAESQAVLEEFLTADIVVIGAPMYNFTIPTQLKSWLDRVLVPGRTFKYGPEGVKGLVEGKRVIVALSRGSFYGQETPYATAEHTETYLRTALGFIGIATPEVIVAEGVSRGEDQRAAAIEAAHQTVAALRV</sequence>
<protein>
    <recommendedName>
        <fullName evidence="1">FMN-dependent NADH:quinone oxidoreductase</fullName>
        <ecNumber evidence="1">1.6.5.-</ecNumber>
    </recommendedName>
    <alternativeName>
        <fullName evidence="1">Azo-dye reductase</fullName>
    </alternativeName>
    <alternativeName>
        <fullName evidence="1">FMN-dependent NADH-azo compound oxidoreductase</fullName>
    </alternativeName>
    <alternativeName>
        <fullName evidence="1">FMN-dependent NADH-azoreductase</fullName>
        <ecNumber evidence="1">1.7.1.17</ecNumber>
    </alternativeName>
</protein>
<organism>
    <name type="scientific">Gluconacetobacter diazotrophicus (strain ATCC 49037 / DSM 5601 / CCUG 37298 / CIP 103539 / LMG 7603 / PAl5)</name>
    <dbReference type="NCBI Taxonomy" id="272568"/>
    <lineage>
        <taxon>Bacteria</taxon>
        <taxon>Pseudomonadati</taxon>
        <taxon>Pseudomonadota</taxon>
        <taxon>Alphaproteobacteria</taxon>
        <taxon>Acetobacterales</taxon>
        <taxon>Acetobacteraceae</taxon>
        <taxon>Gluconacetobacter</taxon>
    </lineage>
</organism>
<accession>A9H9I9</accession>
<accession>B5ZGS7</accession>
<name>AZOR_GLUDA</name>